<protein>
    <recommendedName>
        <fullName evidence="1">Methionine import ATP-binding protein MetN 2</fullName>
        <ecNumber evidence="1">7.4.2.11</ecNumber>
    </recommendedName>
</protein>
<organism>
    <name type="scientific">Bacillus cereus (strain ATCC 14579 / DSM 31 / CCUG 7414 / JCM 2152 / NBRC 15305 / NCIMB 9373 / NCTC 2599 / NRRL B-3711)</name>
    <dbReference type="NCBI Taxonomy" id="226900"/>
    <lineage>
        <taxon>Bacteria</taxon>
        <taxon>Bacillati</taxon>
        <taxon>Bacillota</taxon>
        <taxon>Bacilli</taxon>
        <taxon>Bacillales</taxon>
        <taxon>Bacillaceae</taxon>
        <taxon>Bacillus</taxon>
        <taxon>Bacillus cereus group</taxon>
    </lineage>
</organism>
<name>METN2_BACCR</name>
<gene>
    <name evidence="1" type="primary">metN2</name>
    <name type="ordered locus">BC_0346</name>
</gene>
<dbReference type="EC" id="7.4.2.11" evidence="1"/>
<dbReference type="EMBL" id="AE016877">
    <property type="protein sequence ID" value="AAP07386.1"/>
    <property type="molecule type" value="Genomic_DNA"/>
</dbReference>
<dbReference type="RefSeq" id="NP_830185.1">
    <property type="nucleotide sequence ID" value="NC_004722.1"/>
</dbReference>
<dbReference type="RefSeq" id="WP_000622962.1">
    <property type="nucleotide sequence ID" value="NC_004722.1"/>
</dbReference>
<dbReference type="SMR" id="Q81IN8"/>
<dbReference type="STRING" id="226900.BC_0346"/>
<dbReference type="KEGG" id="bce:BC0346"/>
<dbReference type="PATRIC" id="fig|226900.8.peg.317"/>
<dbReference type="HOGENOM" id="CLU_000604_1_3_9"/>
<dbReference type="OrthoDB" id="9802264at2"/>
<dbReference type="Proteomes" id="UP000001417">
    <property type="component" value="Chromosome"/>
</dbReference>
<dbReference type="GO" id="GO:0005886">
    <property type="term" value="C:plasma membrane"/>
    <property type="evidence" value="ECO:0007669"/>
    <property type="project" value="UniProtKB-SubCell"/>
</dbReference>
<dbReference type="GO" id="GO:0033232">
    <property type="term" value="F:ABC-type D-methionine transporter activity"/>
    <property type="evidence" value="ECO:0007669"/>
    <property type="project" value="UniProtKB-EC"/>
</dbReference>
<dbReference type="GO" id="GO:0005524">
    <property type="term" value="F:ATP binding"/>
    <property type="evidence" value="ECO:0007669"/>
    <property type="project" value="UniProtKB-KW"/>
</dbReference>
<dbReference type="GO" id="GO:0016887">
    <property type="term" value="F:ATP hydrolysis activity"/>
    <property type="evidence" value="ECO:0007669"/>
    <property type="project" value="InterPro"/>
</dbReference>
<dbReference type="CDD" id="cd03258">
    <property type="entry name" value="ABC_MetN_methionine_transporter"/>
    <property type="match status" value="1"/>
</dbReference>
<dbReference type="FunFam" id="3.40.50.300:FF:000233">
    <property type="entry name" value="Methionine import ATP-binding protein MetN"/>
    <property type="match status" value="1"/>
</dbReference>
<dbReference type="Gene3D" id="3.30.70.260">
    <property type="match status" value="1"/>
</dbReference>
<dbReference type="Gene3D" id="3.40.50.300">
    <property type="entry name" value="P-loop containing nucleotide triphosphate hydrolases"/>
    <property type="match status" value="1"/>
</dbReference>
<dbReference type="InterPro" id="IPR003593">
    <property type="entry name" value="AAA+_ATPase"/>
</dbReference>
<dbReference type="InterPro" id="IPR003439">
    <property type="entry name" value="ABC_transporter-like_ATP-bd"/>
</dbReference>
<dbReference type="InterPro" id="IPR017871">
    <property type="entry name" value="ABC_transporter-like_CS"/>
</dbReference>
<dbReference type="InterPro" id="IPR045865">
    <property type="entry name" value="ACT-like_dom_sf"/>
</dbReference>
<dbReference type="InterPro" id="IPR041701">
    <property type="entry name" value="MetN_ABC"/>
</dbReference>
<dbReference type="InterPro" id="IPR050086">
    <property type="entry name" value="MetN_ABC_transporter-like"/>
</dbReference>
<dbReference type="InterPro" id="IPR018449">
    <property type="entry name" value="NIL_domain"/>
</dbReference>
<dbReference type="InterPro" id="IPR027417">
    <property type="entry name" value="P-loop_NTPase"/>
</dbReference>
<dbReference type="PANTHER" id="PTHR43166">
    <property type="entry name" value="AMINO ACID IMPORT ATP-BINDING PROTEIN"/>
    <property type="match status" value="1"/>
</dbReference>
<dbReference type="PANTHER" id="PTHR43166:SF30">
    <property type="entry name" value="METHIONINE IMPORT ATP-BINDING PROTEIN METN"/>
    <property type="match status" value="1"/>
</dbReference>
<dbReference type="Pfam" id="PF00005">
    <property type="entry name" value="ABC_tran"/>
    <property type="match status" value="1"/>
</dbReference>
<dbReference type="Pfam" id="PF09383">
    <property type="entry name" value="NIL"/>
    <property type="match status" value="1"/>
</dbReference>
<dbReference type="SMART" id="SM00382">
    <property type="entry name" value="AAA"/>
    <property type="match status" value="1"/>
</dbReference>
<dbReference type="SMART" id="SM00930">
    <property type="entry name" value="NIL"/>
    <property type="match status" value="1"/>
</dbReference>
<dbReference type="SUPFAM" id="SSF55021">
    <property type="entry name" value="ACT-like"/>
    <property type="match status" value="1"/>
</dbReference>
<dbReference type="SUPFAM" id="SSF52540">
    <property type="entry name" value="P-loop containing nucleoside triphosphate hydrolases"/>
    <property type="match status" value="1"/>
</dbReference>
<dbReference type="PROSITE" id="PS00211">
    <property type="entry name" value="ABC_TRANSPORTER_1"/>
    <property type="match status" value="1"/>
</dbReference>
<dbReference type="PROSITE" id="PS50893">
    <property type="entry name" value="ABC_TRANSPORTER_2"/>
    <property type="match status" value="1"/>
</dbReference>
<dbReference type="PROSITE" id="PS51264">
    <property type="entry name" value="METN"/>
    <property type="match status" value="1"/>
</dbReference>
<sequence length="339" mass="38012">MISFNNVSKLYESAGQSVHAVEDVTLSVEKGEIFGIIGFSGAGKSTLLRLVNMLERPTAGTISIDDKDITSLSTKELRKLRQRIGMIFQSFNLFNSRTVFGNIAYPLKLAKVPKNEIKERVNELLKFVGLEDKANYYPEQLSGGQKQRVGIARALATSPDILICDEATSALDPETTTEILNLLKKVNREYNLTILLITHEMHVVKEICHRVAVMEKGKVIEEGKLFDVFTQPKTKTTQNFVRSVINDHLPESVLAKIQNGGQIYRLTFTGEETGQPVLSYIAKNYNVDVNVLYGNIIELQNVLFGNLLVELQGEQREIQKALQHLRLQVQLKEVEAHAS</sequence>
<evidence type="ECO:0000255" key="1">
    <source>
        <dbReference type="HAMAP-Rule" id="MF_01719"/>
    </source>
</evidence>
<proteinExistence type="inferred from homology"/>
<reference key="1">
    <citation type="journal article" date="2003" name="Nature">
        <title>Genome sequence of Bacillus cereus and comparative analysis with Bacillus anthracis.</title>
        <authorList>
            <person name="Ivanova N."/>
            <person name="Sorokin A."/>
            <person name="Anderson I."/>
            <person name="Galleron N."/>
            <person name="Candelon B."/>
            <person name="Kapatral V."/>
            <person name="Bhattacharyya A."/>
            <person name="Reznik G."/>
            <person name="Mikhailova N."/>
            <person name="Lapidus A."/>
            <person name="Chu L."/>
            <person name="Mazur M."/>
            <person name="Goltsman E."/>
            <person name="Larsen N."/>
            <person name="D'Souza M."/>
            <person name="Walunas T."/>
            <person name="Grechkin Y."/>
            <person name="Pusch G."/>
            <person name="Haselkorn R."/>
            <person name="Fonstein M."/>
            <person name="Ehrlich S.D."/>
            <person name="Overbeek R."/>
            <person name="Kyrpides N.C."/>
        </authorList>
    </citation>
    <scope>NUCLEOTIDE SEQUENCE [LARGE SCALE GENOMIC DNA]</scope>
    <source>
        <strain>ATCC 14579 / DSM 31 / CCUG 7414 / JCM 2152 / NBRC 15305 / NCIMB 9373 / NCTC 2599 / NRRL B-3711</strain>
    </source>
</reference>
<comment type="function">
    <text evidence="1">Part of the ABC transporter complex MetNIQ involved in methionine import. Responsible for energy coupling to the transport system.</text>
</comment>
<comment type="catalytic activity">
    <reaction evidence="1">
        <text>L-methionine(out) + ATP + H2O = L-methionine(in) + ADP + phosphate + H(+)</text>
        <dbReference type="Rhea" id="RHEA:29779"/>
        <dbReference type="ChEBI" id="CHEBI:15377"/>
        <dbReference type="ChEBI" id="CHEBI:15378"/>
        <dbReference type="ChEBI" id="CHEBI:30616"/>
        <dbReference type="ChEBI" id="CHEBI:43474"/>
        <dbReference type="ChEBI" id="CHEBI:57844"/>
        <dbReference type="ChEBI" id="CHEBI:456216"/>
        <dbReference type="EC" id="7.4.2.11"/>
    </reaction>
</comment>
<comment type="catalytic activity">
    <reaction evidence="1">
        <text>D-methionine(out) + ATP + H2O = D-methionine(in) + ADP + phosphate + H(+)</text>
        <dbReference type="Rhea" id="RHEA:29767"/>
        <dbReference type="ChEBI" id="CHEBI:15377"/>
        <dbReference type="ChEBI" id="CHEBI:15378"/>
        <dbReference type="ChEBI" id="CHEBI:30616"/>
        <dbReference type="ChEBI" id="CHEBI:43474"/>
        <dbReference type="ChEBI" id="CHEBI:57932"/>
        <dbReference type="ChEBI" id="CHEBI:456216"/>
        <dbReference type="EC" id="7.4.2.11"/>
    </reaction>
</comment>
<comment type="subunit">
    <text evidence="1">The complex is composed of two ATP-binding proteins (MetN), two transmembrane proteins (MetI) and a solute-binding protein (MetQ).</text>
</comment>
<comment type="subcellular location">
    <subcellularLocation>
        <location evidence="1">Cell membrane</location>
        <topology evidence="1">Peripheral membrane protein</topology>
    </subcellularLocation>
</comment>
<comment type="similarity">
    <text evidence="1">Belongs to the ABC transporter superfamily. Methionine importer (TC 3.A.1.24) family.</text>
</comment>
<feature type="chain" id="PRO_0000270236" description="Methionine import ATP-binding protein MetN 2">
    <location>
        <begin position="1"/>
        <end position="339"/>
    </location>
</feature>
<feature type="domain" description="ABC transporter" evidence="1">
    <location>
        <begin position="2"/>
        <end position="241"/>
    </location>
</feature>
<feature type="binding site" evidence="1">
    <location>
        <begin position="38"/>
        <end position="45"/>
    </location>
    <ligand>
        <name>ATP</name>
        <dbReference type="ChEBI" id="CHEBI:30616"/>
    </ligand>
</feature>
<accession>Q81IN8</accession>
<keyword id="KW-0029">Amino-acid transport</keyword>
<keyword id="KW-0067">ATP-binding</keyword>
<keyword id="KW-1003">Cell membrane</keyword>
<keyword id="KW-0472">Membrane</keyword>
<keyword id="KW-0547">Nucleotide-binding</keyword>
<keyword id="KW-1185">Reference proteome</keyword>
<keyword id="KW-1278">Translocase</keyword>
<keyword id="KW-0813">Transport</keyword>